<dbReference type="EMBL" id="X64615">
    <property type="protein sequence ID" value="CAA45897.2"/>
    <property type="molecule type" value="Genomic_DNA"/>
</dbReference>
<dbReference type="PIR" id="S19987">
    <property type="entry name" value="S19987"/>
</dbReference>
<dbReference type="GO" id="GO:0009507">
    <property type="term" value="C:chloroplast"/>
    <property type="evidence" value="ECO:0007669"/>
    <property type="project" value="UniProtKB-SubCell"/>
</dbReference>
<dbReference type="InterPro" id="IPR019645">
    <property type="entry name" value="Uncharacterised_Ycf15"/>
</dbReference>
<dbReference type="Pfam" id="PF10705">
    <property type="entry name" value="Ycf15"/>
    <property type="match status" value="1"/>
</dbReference>
<organism>
    <name type="scientific">Oenothera villaricae</name>
    <name type="common">Evening primrose</name>
    <dbReference type="NCBI Taxonomy" id="3941"/>
    <lineage>
        <taxon>Eukaryota</taxon>
        <taxon>Viridiplantae</taxon>
        <taxon>Streptophyta</taxon>
        <taxon>Embryophyta</taxon>
        <taxon>Tracheophyta</taxon>
        <taxon>Spermatophyta</taxon>
        <taxon>Magnoliopsida</taxon>
        <taxon>eudicotyledons</taxon>
        <taxon>Gunneridae</taxon>
        <taxon>Pentapetalae</taxon>
        <taxon>rosids</taxon>
        <taxon>malvids</taxon>
        <taxon>Myrtales</taxon>
        <taxon>Onagraceae</taxon>
        <taxon>Onagroideae</taxon>
        <taxon>Onagreae</taxon>
        <taxon>Oenothera</taxon>
    </lineage>
</organism>
<gene>
    <name type="primary">ycf15</name>
</gene>
<keyword id="KW-0150">Chloroplast</keyword>
<keyword id="KW-0934">Plastid</keyword>
<name>YCF15_OENVI</name>
<proteinExistence type="uncertain"/>
<accession>P68942</accession>
<accession>P31566</accession>
<protein>
    <recommendedName>
        <fullName>Putative uncharacterized protein ycf15</fullName>
    </recommendedName>
    <alternativeName>
        <fullName>ORF 80</fullName>
    </alternativeName>
</protein>
<geneLocation type="chloroplast"/>
<reference key="1">
    <citation type="journal article" date="1993" name="Curr. Genet.">
        <title>In-frame length mutations associated with short tandem repeats are located in unassigned open reading frames of Oenothera chloroplast DNA.</title>
        <authorList>
            <person name="Nimzyk R."/>
            <person name="Schoendorf T."/>
            <person name="Hachtel W."/>
        </authorList>
    </citation>
    <scope>NUCLEOTIDE SEQUENCE [GENOMIC DNA]</scope>
</reference>
<sequence length="80" mass="9408">METPVSSLFWTLAPRNNMLLLKDGRIEILDQNTMYGWYELPKQEFLNSVRTIQIFTTKKYCIPFRIGPERRRKAGMPTGV</sequence>
<feature type="chain" id="PRO_0000217312" description="Putative uncharacterized protein ycf15">
    <location>
        <begin position="1"/>
        <end position="80"/>
    </location>
</feature>
<comment type="subcellular location">
    <subcellularLocation>
        <location>Plastid</location>
        <location>Chloroplast</location>
    </subcellularLocation>
</comment>
<comment type="similarity">
    <text evidence="1">Belongs to the ycf15 family.</text>
</comment>
<comment type="caution">
    <text evidence="1">Could be the product of a pseudogene.</text>
</comment>
<evidence type="ECO:0000305" key="1"/>